<accession>P34901</accession>
<reference key="1">
    <citation type="journal article" date="1992" name="J. Biol. Chem.">
        <title>Molecular cloning and expression of two distinct cDNA-encoding heparan sulfate proteoglycan core proteins from a rat endothelial cell line.</title>
        <authorList>
            <person name="Kojima T."/>
            <person name="Shworak N.W."/>
            <person name="Rosenberg R.D."/>
        </authorList>
    </citation>
    <scope>NUCLEOTIDE SEQUENCE [MRNA]</scope>
    <scope>PARTIAL PROTEIN SEQUENCE</scope>
</reference>
<reference key="2">
    <citation type="journal article" date="1993" name="Haemostasis">
        <title>Isolation and characterization of ryudocan and syndecan heparan sulfate proteoglycans, core proteins, and cDNAs from a rat endothelial cell line.</title>
        <authorList>
            <person name="Shworak N.W."/>
            <person name="Kojima T."/>
            <person name="Rosenberg R.D."/>
        </authorList>
    </citation>
    <scope>NUCLEOTIDE SEQUENCE [MRNA]</scope>
</reference>
<reference key="3">
    <citation type="journal article" date="1994" name="J. Biol. Chem.">
        <title>Characterization of ryudocan glycosaminoglycan acceptor sites.</title>
        <authorList>
            <person name="Shworak N.W."/>
            <person name="Shirakawa M."/>
            <person name="Mulligan R.C."/>
            <person name="Rosenberg R.D."/>
        </authorList>
    </citation>
    <scope>GLYCOSYLATION AT SER-44; SER-65 AND SER-67</scope>
    <scope>MUTAGENESIS OF SER-44; SER-65 AND SER-67</scope>
</reference>
<protein>
    <recommendedName>
        <fullName evidence="6">Syndecan-4</fullName>
        <shortName>SYND4</shortName>
    </recommendedName>
    <alternativeName>
        <fullName>Ryudocan core protein</fullName>
    </alternativeName>
</protein>
<proteinExistence type="evidence at protein level"/>
<comment type="function">
    <text evidence="2">Cell surface proteoglycan which regulates exosome biogenesis in concert with SDCBP and PDCD6IP.</text>
</comment>
<comment type="subunit">
    <text evidence="1 2">Homodimer. Interacts with CDCP1 and SDCBP (By similarity). Interacts (via its cytoplasmic domain) with GIPC (via its PDZ domain). Interacts (via its cytoplasmic domain) with NUDT16L1 (By similarity). Interacts with DNM2; this interaction is markedly enhanced at focal ahesion site upon induction of focal adhesions and stress-fiber formation (By similarity).</text>
</comment>
<comment type="interaction">
    <interactant intactId="EBI-1173182">
        <id>P34901</id>
    </interactant>
    <interactant intactId="EBI-6127274">
        <id>P04937</id>
        <label>Fn1</label>
    </interactant>
    <organismsDiffer>false</organismsDiffer>
    <experiments>2</experiments>
</comment>
<comment type="interaction">
    <interactant intactId="EBI-1173182">
        <id>P34901</id>
    </interactant>
    <interactant intactId="EBI-935801">
        <id>P05696</id>
        <label>Prkca</label>
    </interactant>
    <organismsDiffer>false</organismsDiffer>
    <experiments>3</experiments>
</comment>
<comment type="interaction">
    <interactant intactId="EBI-1173182">
        <id>P34901</id>
    </interactant>
    <interactant intactId="EBI-1173032">
        <id>P34900</id>
        <label>Sdc2</label>
    </interactant>
    <organismsDiffer>false</organismsDiffer>
    <experiments>4</experiments>
</comment>
<comment type="interaction">
    <interactant intactId="EBI-1173182">
        <id>P34901</id>
    </interactant>
    <interactant intactId="EBI-1173182">
        <id>P34901</id>
        <label>Sdc4</label>
    </interactant>
    <organismsDiffer>false</organismsDiffer>
    <experiments>3</experiments>
</comment>
<comment type="subcellular location">
    <subcellularLocation>
        <location evidence="3">Membrane</location>
        <topology evidence="3">Single-pass type I membrane protein</topology>
    </subcellularLocation>
    <subcellularLocation>
        <location evidence="2">Secreted</location>
    </subcellularLocation>
    <text evidence="2">Shedding of the ectodomain produces a soluble form.</text>
</comment>
<comment type="PTM">
    <text evidence="2">Shedding is enhanced by a number of factors such as heparanase, thrombin or EGF. Also by stress and wound healing. PMA-mediated shedding is inhibited by TIMP3 (By similarity).</text>
</comment>
<comment type="PTM">
    <text evidence="5">O-glycosylated; contains both chondroitin sulfate and heparan sulfate (PubMed:7520439). Ser-44, Ser-65 and Ser-67 can all be modified by either chondroitin sulfate or heparan sulfate, and the protein exists in forms that contain only chondroitin sulfate, only heparan sulfate and both chondroitin sulfate and heparan sulfate (PubMed:7520439).</text>
</comment>
<comment type="similarity">
    <text evidence="6">Belongs to the syndecan proteoglycan family.</text>
</comment>
<sequence>MAPVCLFAPLLLLLLGGFPVAPGESIRETEVIDPQDLLEGRYFSGALPDDEDAGGLEQDSDFELSGSGDLDDTEEPRTFPEVISPLVPLDNHIPENAQPGIRVPSEPKELEENEVIPKRVPSDVGDDDVSNKVSMSSTSQGSNIFERTEVLAALIVGGVVGILFAVFLILLLVYRMKKKDEGSYDLGKKPIYKKAPTNEFYA</sequence>
<name>SDC4_RAT</name>
<dbReference type="EMBL" id="M81786">
    <property type="protein sequence ID" value="AAA73167.1"/>
    <property type="molecule type" value="mRNA"/>
</dbReference>
<dbReference type="EMBL" id="S61868">
    <property type="protein sequence ID" value="AAB26725.1"/>
    <property type="molecule type" value="mRNA"/>
</dbReference>
<dbReference type="PIR" id="A42410">
    <property type="entry name" value="A42410"/>
</dbReference>
<dbReference type="RefSeq" id="NP_036781.1">
    <property type="nucleotide sequence ID" value="NM_012649.4"/>
</dbReference>
<dbReference type="PDB" id="5A2P">
    <property type="method" value="X-ray"/>
    <property type="resolution" value="2.50 A"/>
    <property type="chains" value="E/F/G/H=195-202"/>
</dbReference>
<dbReference type="PDB" id="5G1D">
    <property type="method" value="X-ray"/>
    <property type="resolution" value="2.81 A"/>
    <property type="chains" value="C/D=195-202"/>
</dbReference>
<dbReference type="PDBsum" id="5A2P"/>
<dbReference type="PDBsum" id="5G1D"/>
<dbReference type="BMRB" id="P34901"/>
<dbReference type="SMR" id="P34901"/>
<dbReference type="BioGRID" id="246895">
    <property type="interactions" value="2"/>
</dbReference>
<dbReference type="FunCoup" id="P34901">
    <property type="interactions" value="402"/>
</dbReference>
<dbReference type="IntAct" id="P34901">
    <property type="interactions" value="7"/>
</dbReference>
<dbReference type="MINT" id="P34901"/>
<dbReference type="STRING" id="10116.ENSRNOP00000019386"/>
<dbReference type="GlyCosmos" id="P34901">
    <property type="glycosylation" value="3 sites, No reported glycans"/>
</dbReference>
<dbReference type="GlyGen" id="P34901">
    <property type="glycosylation" value="3 sites"/>
</dbReference>
<dbReference type="iPTMnet" id="P34901"/>
<dbReference type="PhosphoSitePlus" id="P34901"/>
<dbReference type="PaxDb" id="10116-ENSRNOP00000019386"/>
<dbReference type="Ensembl" id="ENSRNOT00000019386.4">
    <property type="protein sequence ID" value="ENSRNOP00000019386.2"/>
    <property type="gene ID" value="ENSRNOG00000014297.4"/>
</dbReference>
<dbReference type="GeneID" id="24771"/>
<dbReference type="KEGG" id="rno:24771"/>
<dbReference type="UCSC" id="RGD:3650">
    <property type="organism name" value="rat"/>
</dbReference>
<dbReference type="AGR" id="RGD:3650"/>
<dbReference type="CTD" id="6385"/>
<dbReference type="RGD" id="3650">
    <property type="gene designation" value="Sdc4"/>
</dbReference>
<dbReference type="eggNOG" id="ENOG502S1SZ">
    <property type="taxonomic scope" value="Eukaryota"/>
</dbReference>
<dbReference type="GeneTree" id="ENSGT00940000160663"/>
<dbReference type="HOGENOM" id="CLU_046599_3_0_1"/>
<dbReference type="InParanoid" id="P34901"/>
<dbReference type="OMA" id="WVPTEPK"/>
<dbReference type="OrthoDB" id="10044468at2759"/>
<dbReference type="PhylomeDB" id="P34901"/>
<dbReference type="TreeFam" id="TF320463"/>
<dbReference type="Reactome" id="R-RNO-1971475">
    <property type="pathway name" value="A tetrasaccharide linker sequence is required for GAG synthesis"/>
</dbReference>
<dbReference type="Reactome" id="R-RNO-2022928">
    <property type="pathway name" value="HS-GAG biosynthesis"/>
</dbReference>
<dbReference type="Reactome" id="R-RNO-2024096">
    <property type="pathway name" value="HS-GAG degradation"/>
</dbReference>
<dbReference type="Reactome" id="R-RNO-202733">
    <property type="pathway name" value="Cell surface interactions at the vascular wall"/>
</dbReference>
<dbReference type="Reactome" id="R-RNO-3000170">
    <property type="pathway name" value="Syndecan interactions"/>
</dbReference>
<dbReference type="Reactome" id="R-RNO-975634">
    <property type="pathway name" value="Retinoid metabolism and transport"/>
</dbReference>
<dbReference type="PRO" id="PR:P34901"/>
<dbReference type="Proteomes" id="UP000002494">
    <property type="component" value="Chromosome 3"/>
</dbReference>
<dbReference type="Bgee" id="ENSRNOG00000014297">
    <property type="expression patterns" value="Expressed in kidney and 20 other cell types or tissues"/>
</dbReference>
<dbReference type="GO" id="GO:0009986">
    <property type="term" value="C:cell surface"/>
    <property type="evidence" value="ECO:0000314"/>
    <property type="project" value="RGD"/>
</dbReference>
<dbReference type="GO" id="GO:0043034">
    <property type="term" value="C:costamere"/>
    <property type="evidence" value="ECO:0000314"/>
    <property type="project" value="RGD"/>
</dbReference>
<dbReference type="GO" id="GO:0005576">
    <property type="term" value="C:extracellular region"/>
    <property type="evidence" value="ECO:0007669"/>
    <property type="project" value="UniProtKB-SubCell"/>
</dbReference>
<dbReference type="GO" id="GO:0005925">
    <property type="term" value="C:focal adhesion"/>
    <property type="evidence" value="ECO:0000314"/>
    <property type="project" value="RGD"/>
</dbReference>
<dbReference type="GO" id="GO:0005886">
    <property type="term" value="C:plasma membrane"/>
    <property type="evidence" value="ECO:0000304"/>
    <property type="project" value="Reactome"/>
</dbReference>
<dbReference type="GO" id="GO:0001968">
    <property type="term" value="F:fibronectin binding"/>
    <property type="evidence" value="ECO:0000314"/>
    <property type="project" value="RGD"/>
</dbReference>
<dbReference type="GO" id="GO:0042802">
    <property type="term" value="F:identical protein binding"/>
    <property type="evidence" value="ECO:0000353"/>
    <property type="project" value="IntAct"/>
</dbReference>
<dbReference type="GO" id="GO:0005080">
    <property type="term" value="F:protein kinase C binding"/>
    <property type="evidence" value="ECO:0000314"/>
    <property type="project" value="RGD"/>
</dbReference>
<dbReference type="GO" id="GO:0070053">
    <property type="term" value="F:thrombospondin receptor activity"/>
    <property type="evidence" value="ECO:0000266"/>
    <property type="project" value="RGD"/>
</dbReference>
<dbReference type="GO" id="GO:0007155">
    <property type="term" value="P:cell adhesion"/>
    <property type="evidence" value="ECO:0000303"/>
    <property type="project" value="RGD"/>
</dbReference>
<dbReference type="GO" id="GO:0016477">
    <property type="term" value="P:cell migration"/>
    <property type="evidence" value="ECO:0000318"/>
    <property type="project" value="GO_Central"/>
</dbReference>
<dbReference type="GO" id="GO:0007267">
    <property type="term" value="P:cell-cell signaling"/>
    <property type="evidence" value="ECO:0000303"/>
    <property type="project" value="RGD"/>
</dbReference>
<dbReference type="GO" id="GO:0060122">
    <property type="term" value="P:inner ear receptor cell stereocilium organization"/>
    <property type="evidence" value="ECO:0000266"/>
    <property type="project" value="RGD"/>
</dbReference>
<dbReference type="GO" id="GO:0042130">
    <property type="term" value="P:negative regulation of T cell proliferation"/>
    <property type="evidence" value="ECO:0000266"/>
    <property type="project" value="RGD"/>
</dbReference>
<dbReference type="GO" id="GO:0001843">
    <property type="term" value="P:neural tube closure"/>
    <property type="evidence" value="ECO:0000266"/>
    <property type="project" value="RGD"/>
</dbReference>
<dbReference type="GO" id="GO:1903543">
    <property type="term" value="P:positive regulation of exosomal secretion"/>
    <property type="evidence" value="ECO:0000266"/>
    <property type="project" value="RGD"/>
</dbReference>
<dbReference type="GO" id="GO:1903553">
    <property type="term" value="P:positive regulation of extracellular exosome assembly"/>
    <property type="evidence" value="ECO:0000266"/>
    <property type="project" value="RGD"/>
</dbReference>
<dbReference type="GO" id="GO:0051894">
    <property type="term" value="P:positive regulation of focal adhesion assembly"/>
    <property type="evidence" value="ECO:0000315"/>
    <property type="project" value="RGD"/>
</dbReference>
<dbReference type="GO" id="GO:0051496">
    <property type="term" value="P:positive regulation of stress fiber assembly"/>
    <property type="evidence" value="ECO:0000315"/>
    <property type="project" value="RGD"/>
</dbReference>
<dbReference type="GO" id="GO:0010762">
    <property type="term" value="P:regulation of fibroblast migration"/>
    <property type="evidence" value="ECO:0000266"/>
    <property type="project" value="RGD"/>
</dbReference>
<dbReference type="GO" id="GO:0001657">
    <property type="term" value="P:ureteric bud development"/>
    <property type="evidence" value="ECO:0000270"/>
    <property type="project" value="RGD"/>
</dbReference>
<dbReference type="GO" id="GO:0042060">
    <property type="term" value="P:wound healing"/>
    <property type="evidence" value="ECO:0000266"/>
    <property type="project" value="RGD"/>
</dbReference>
<dbReference type="InterPro" id="IPR003585">
    <property type="entry name" value="Neurexin-like"/>
</dbReference>
<dbReference type="InterPro" id="IPR001050">
    <property type="entry name" value="Syndecan"/>
</dbReference>
<dbReference type="InterPro" id="IPR027789">
    <property type="entry name" value="Syndecan/Neurexin_dom"/>
</dbReference>
<dbReference type="InterPro" id="IPR030479">
    <property type="entry name" value="Syndecan_CS"/>
</dbReference>
<dbReference type="PANTHER" id="PTHR10915">
    <property type="entry name" value="SYNDECAN"/>
    <property type="match status" value="1"/>
</dbReference>
<dbReference type="PANTHER" id="PTHR10915:SF3">
    <property type="entry name" value="SYNDECAN-4"/>
    <property type="match status" value="1"/>
</dbReference>
<dbReference type="Pfam" id="PF01034">
    <property type="entry name" value="Syndecan"/>
    <property type="match status" value="1"/>
</dbReference>
<dbReference type="SMART" id="SM00294">
    <property type="entry name" value="4.1m"/>
    <property type="match status" value="1"/>
</dbReference>
<dbReference type="PROSITE" id="PS00964">
    <property type="entry name" value="SYNDECAN"/>
    <property type="match status" value="1"/>
</dbReference>
<gene>
    <name evidence="7" type="primary">Sdc4</name>
    <name type="synonym">Synd4</name>
</gene>
<organism>
    <name type="scientific">Rattus norvegicus</name>
    <name type="common">Rat</name>
    <dbReference type="NCBI Taxonomy" id="10116"/>
    <lineage>
        <taxon>Eukaryota</taxon>
        <taxon>Metazoa</taxon>
        <taxon>Chordata</taxon>
        <taxon>Craniata</taxon>
        <taxon>Vertebrata</taxon>
        <taxon>Euteleostomi</taxon>
        <taxon>Mammalia</taxon>
        <taxon>Eutheria</taxon>
        <taxon>Euarchontoglires</taxon>
        <taxon>Glires</taxon>
        <taxon>Rodentia</taxon>
        <taxon>Myomorpha</taxon>
        <taxon>Muroidea</taxon>
        <taxon>Muridae</taxon>
        <taxon>Murinae</taxon>
        <taxon>Rattus</taxon>
    </lineage>
</organism>
<keyword id="KW-0002">3D-structure</keyword>
<keyword id="KW-0903">Direct protein sequencing</keyword>
<keyword id="KW-0325">Glycoprotein</keyword>
<keyword id="KW-0357">Heparan sulfate</keyword>
<keyword id="KW-0472">Membrane</keyword>
<keyword id="KW-0654">Proteoglycan</keyword>
<keyword id="KW-1185">Reference proteome</keyword>
<keyword id="KW-0964">Secreted</keyword>
<keyword id="KW-0732">Signal</keyword>
<keyword id="KW-0812">Transmembrane</keyword>
<keyword id="KW-1133">Transmembrane helix</keyword>
<evidence type="ECO:0000250" key="1">
    <source>
        <dbReference type="UniProtKB" id="O35988"/>
    </source>
</evidence>
<evidence type="ECO:0000250" key="2">
    <source>
        <dbReference type="UniProtKB" id="P31431"/>
    </source>
</evidence>
<evidence type="ECO:0000255" key="3"/>
<evidence type="ECO:0000256" key="4">
    <source>
        <dbReference type="SAM" id="MobiDB-lite"/>
    </source>
</evidence>
<evidence type="ECO:0000269" key="5">
    <source>
    </source>
</evidence>
<evidence type="ECO:0000305" key="6"/>
<evidence type="ECO:0000312" key="7">
    <source>
        <dbReference type="RGD" id="3650"/>
    </source>
</evidence>
<evidence type="ECO:0007829" key="8">
    <source>
        <dbReference type="PDB" id="5A2P"/>
    </source>
</evidence>
<feature type="signal peptide" evidence="3">
    <location>
        <begin position="1"/>
        <end position="23"/>
    </location>
</feature>
<feature type="chain" id="PRO_0000033513" description="Syndecan-4">
    <location>
        <begin position="24"/>
        <end position="202"/>
    </location>
</feature>
<feature type="topological domain" description="Extracellular" evidence="3">
    <location>
        <begin position="24"/>
        <end position="149"/>
    </location>
</feature>
<feature type="transmembrane region" description="Helical" evidence="3">
    <location>
        <begin position="150"/>
        <end position="174"/>
    </location>
</feature>
<feature type="topological domain" description="Cytoplasmic" evidence="3">
    <location>
        <begin position="175"/>
        <end position="202"/>
    </location>
</feature>
<feature type="region of interest" description="Disordered" evidence="4">
    <location>
        <begin position="42"/>
        <end position="76"/>
    </location>
</feature>
<feature type="region of interest" description="Disordered" evidence="4">
    <location>
        <begin position="89"/>
        <end position="138"/>
    </location>
</feature>
<feature type="compositionally biased region" description="Acidic residues" evidence="4">
    <location>
        <begin position="48"/>
        <end position="62"/>
    </location>
</feature>
<feature type="compositionally biased region" description="Basic and acidic residues" evidence="4">
    <location>
        <begin position="105"/>
        <end position="121"/>
    </location>
</feature>
<feature type="glycosylation site" description="O-linked (Xyl...) (glycosaminoglycan) serine" evidence="5">
    <location>
        <position position="44"/>
    </location>
</feature>
<feature type="glycosylation site" description="O-linked (Xyl...) (glycosaminoglycan) serine" evidence="5">
    <location>
        <position position="65"/>
    </location>
</feature>
<feature type="glycosylation site" description="O-linked (Xyl...) (glycosaminoglycan) serine" evidence="5">
    <location>
        <position position="67"/>
    </location>
</feature>
<feature type="mutagenesis site" description="Reduced glycosaminoglycan attachment." evidence="5">
    <original>S</original>
    <variation>T</variation>
    <location>
        <position position="44"/>
    </location>
</feature>
<feature type="mutagenesis site" description="Reduced glycosaminoglycan attachment." evidence="5">
    <original>S</original>
    <variation>T</variation>
    <location>
        <position position="65"/>
    </location>
</feature>
<feature type="mutagenesis site" description="Reduced glycosaminoglycan attachment." evidence="5">
    <original>S</original>
    <variation>T</variation>
    <location>
        <position position="67"/>
    </location>
</feature>
<feature type="strand" evidence="8">
    <location>
        <begin position="200"/>
        <end position="202"/>
    </location>
</feature>